<protein>
    <recommendedName>
        <fullName>UPF0768 protein YBL029C-A</fullName>
    </recommendedName>
</protein>
<proteinExistence type="evidence at protein level"/>
<reference key="1">
    <citation type="journal article" date="1994" name="EMBO J.">
        <title>Complete DNA sequence of yeast chromosome II.</title>
        <authorList>
            <person name="Feldmann H."/>
            <person name="Aigle M."/>
            <person name="Aljinovic G."/>
            <person name="Andre B."/>
            <person name="Baclet M.C."/>
            <person name="Barthe C."/>
            <person name="Baur A."/>
            <person name="Becam A.-M."/>
            <person name="Biteau N."/>
            <person name="Boles E."/>
            <person name="Brandt T."/>
            <person name="Brendel M."/>
            <person name="Brueckner M."/>
            <person name="Bussereau F."/>
            <person name="Christiansen C."/>
            <person name="Contreras R."/>
            <person name="Crouzet M."/>
            <person name="Cziepluch C."/>
            <person name="Demolis N."/>
            <person name="Delaveau T."/>
            <person name="Doignon F."/>
            <person name="Domdey H."/>
            <person name="Duesterhus S."/>
            <person name="Dubois E."/>
            <person name="Dujon B."/>
            <person name="El Bakkoury M."/>
            <person name="Entian K.-D."/>
            <person name="Feuermann M."/>
            <person name="Fiers W."/>
            <person name="Fobo G.M."/>
            <person name="Fritz C."/>
            <person name="Gassenhuber J."/>
            <person name="Glansdorff N."/>
            <person name="Goffeau A."/>
            <person name="Grivell L.A."/>
            <person name="de Haan M."/>
            <person name="Hein C."/>
            <person name="Herbert C.J."/>
            <person name="Hollenberg C.P."/>
            <person name="Holmstroem K."/>
            <person name="Jacq C."/>
            <person name="Jacquet M."/>
            <person name="Jauniaux J.-C."/>
            <person name="Jonniaux J.-L."/>
            <person name="Kallesoee T."/>
            <person name="Kiesau P."/>
            <person name="Kirchrath L."/>
            <person name="Koetter P."/>
            <person name="Korol S."/>
            <person name="Liebl S."/>
            <person name="Logghe M."/>
            <person name="Lohan A.J.E."/>
            <person name="Louis E.J."/>
            <person name="Li Z.Y."/>
            <person name="Maat M.J."/>
            <person name="Mallet L."/>
            <person name="Mannhaupt G."/>
            <person name="Messenguy F."/>
            <person name="Miosga T."/>
            <person name="Molemans F."/>
            <person name="Mueller S."/>
            <person name="Nasr F."/>
            <person name="Obermaier B."/>
            <person name="Perea J."/>
            <person name="Pierard A."/>
            <person name="Piravandi E."/>
            <person name="Pohl F.M."/>
            <person name="Pohl T.M."/>
            <person name="Potier S."/>
            <person name="Proft M."/>
            <person name="Purnelle B."/>
            <person name="Ramezani Rad M."/>
            <person name="Rieger M."/>
            <person name="Rose M."/>
            <person name="Schaaff-Gerstenschlaeger I."/>
            <person name="Scherens B."/>
            <person name="Schwarzlose C."/>
            <person name="Skala J."/>
            <person name="Slonimski P.P."/>
            <person name="Smits P.H.M."/>
            <person name="Souciet J.-L."/>
            <person name="Steensma H.Y."/>
            <person name="Stucka R."/>
            <person name="Urrestarazu L.A."/>
            <person name="van der Aart Q.J.M."/>
            <person name="Van Dyck L."/>
            <person name="Vassarotti A."/>
            <person name="Vetter I."/>
            <person name="Vierendeels F."/>
            <person name="Vissers S."/>
            <person name="Wagner G."/>
            <person name="de Wergifosse P."/>
            <person name="Wolfe K.H."/>
            <person name="Zagulski M."/>
            <person name="Zimmermann F.K."/>
            <person name="Mewes H.-W."/>
            <person name="Kleine K."/>
        </authorList>
    </citation>
    <scope>NUCLEOTIDE SEQUENCE [LARGE SCALE GENOMIC DNA]</scope>
    <source>
        <strain>ATCC 204508 / S288c</strain>
    </source>
</reference>
<reference key="2">
    <citation type="journal article" date="2014" name="G3 (Bethesda)">
        <title>The reference genome sequence of Saccharomyces cerevisiae: Then and now.</title>
        <authorList>
            <person name="Engel S.R."/>
            <person name="Dietrich F.S."/>
            <person name="Fisk D.G."/>
            <person name="Binkley G."/>
            <person name="Balakrishnan R."/>
            <person name="Costanzo M.C."/>
            <person name="Dwight S.S."/>
            <person name="Hitz B.C."/>
            <person name="Karra K."/>
            <person name="Nash R.S."/>
            <person name="Weng S."/>
            <person name="Wong E.D."/>
            <person name="Lloyd P."/>
            <person name="Skrzypek M.S."/>
            <person name="Miyasato S.R."/>
            <person name="Simison M."/>
            <person name="Cherry J.M."/>
        </authorList>
    </citation>
    <scope>GENOME REANNOTATION</scope>
    <source>
        <strain>ATCC 204508 / S288c</strain>
    </source>
</reference>
<reference key="3">
    <citation type="journal article" date="2000" name="FEBS Lett.">
        <title>Genomic exploration of the hemiascomycetous yeasts: 4. The genome of Saccharomyces cerevisiae revisited.</title>
        <authorList>
            <person name="Blandin G."/>
            <person name="Durrens P."/>
            <person name="Tekaia F."/>
            <person name="Aigle M."/>
            <person name="Bolotin-Fukuhara M."/>
            <person name="Bon E."/>
            <person name="Casaregola S."/>
            <person name="de Montigny J."/>
            <person name="Gaillardin C."/>
            <person name="Lepingle A."/>
            <person name="Llorente B."/>
            <person name="Malpertuy A."/>
            <person name="Neuveglise C."/>
            <person name="Ozier-Kalogeropoulos O."/>
            <person name="Perrin A."/>
            <person name="Potier S."/>
            <person name="Souciet J.-L."/>
            <person name="Talla E."/>
            <person name="Toffano-Nioche C."/>
            <person name="Wesolowski-Louvel M."/>
            <person name="Marck C."/>
            <person name="Dujon B."/>
        </authorList>
    </citation>
    <scope>GENOME REANNOTATION</scope>
</reference>
<reference key="4">
    <citation type="journal article" date="2003" name="Nature">
        <title>Global analysis of protein expression in yeast.</title>
        <authorList>
            <person name="Ghaemmaghami S."/>
            <person name="Huh W.-K."/>
            <person name="Bower K."/>
            <person name="Howson R.W."/>
            <person name="Belle A."/>
            <person name="Dephoure N."/>
            <person name="O'Shea E.K."/>
            <person name="Weissman J.S."/>
        </authorList>
    </citation>
    <scope>LEVEL OF PROTEIN EXPRESSION [LARGE SCALE ANALYSIS]</scope>
</reference>
<reference key="5">
    <citation type="journal article" date="2003" name="Nature">
        <title>Global analysis of protein localization in budding yeast.</title>
        <authorList>
            <person name="Huh W.-K."/>
            <person name="Falvo J.V."/>
            <person name="Gerke L.C."/>
            <person name="Carroll A.S."/>
            <person name="Howson R.W."/>
            <person name="Weissman J.S."/>
            <person name="O'Shea E.K."/>
        </authorList>
    </citation>
    <scope>SUBCELLULAR LOCATION [LARGE SCALE ANALYSIS]</scope>
</reference>
<name>YB029_YEAST</name>
<comment type="subcellular location">
    <subcellularLocation>
        <location evidence="1">Cell membrane</location>
        <topology evidence="1">Peripheral membrane protein</topology>
    </subcellularLocation>
    <text>Cell periphery.</text>
</comment>
<comment type="miscellaneous">
    <text evidence="2">Present with 996 molecules/cell in log phase SD medium.</text>
</comment>
<comment type="similarity">
    <text evidence="3">Belongs to the UPF0768 family.</text>
</comment>
<evidence type="ECO:0000269" key="1">
    <source>
    </source>
</evidence>
<evidence type="ECO:0000269" key="2">
    <source>
    </source>
</evidence>
<evidence type="ECO:0000305" key="3"/>
<feature type="chain" id="PRO_0000248433" description="UPF0768 protein YBL029C-A">
    <location>
        <begin position="1"/>
        <end position="94"/>
    </location>
</feature>
<accession>Q3E756</accession>
<accession>D6VPX0</accession>
<gene>
    <name type="ordered locus">YBL029C-A</name>
</gene>
<sequence>MSFIPIVCGMKSFDSSYDTVPGHQNLYCPNCHNYSVGPIKRKEFFTIWFIPLVPVFWGKQLHCPICNWRQDFKNDEQLNKVIQEQQNLRQKQPN</sequence>
<dbReference type="EMBL" id="Z35791">
    <property type="status" value="NOT_ANNOTATED_CDS"/>
    <property type="molecule type" value="Genomic_DNA"/>
</dbReference>
<dbReference type="EMBL" id="BK006936">
    <property type="protein sequence ID" value="DAA07090.1"/>
    <property type="molecule type" value="Genomic_DNA"/>
</dbReference>
<dbReference type="RefSeq" id="NP_076874.1">
    <property type="nucleotide sequence ID" value="NM_001184457.1"/>
</dbReference>
<dbReference type="BioGRID" id="32668">
    <property type="interactions" value="40"/>
</dbReference>
<dbReference type="FunCoup" id="Q3E756">
    <property type="interactions" value="87"/>
</dbReference>
<dbReference type="IntAct" id="Q3E756">
    <property type="interactions" value="17"/>
</dbReference>
<dbReference type="MINT" id="Q3E756"/>
<dbReference type="STRING" id="4932.YBL029C-A"/>
<dbReference type="iPTMnet" id="Q3E756"/>
<dbReference type="PaxDb" id="4932-YBL029C-A"/>
<dbReference type="PeptideAtlas" id="Q3E756"/>
<dbReference type="EnsemblFungi" id="YBL029C-A_mRNA">
    <property type="protein sequence ID" value="YBL029C-A"/>
    <property type="gene ID" value="YBL029C-A"/>
</dbReference>
<dbReference type="GeneID" id="852251"/>
<dbReference type="KEGG" id="sce:YBL029C-A"/>
<dbReference type="AGR" id="SGD:S000007591"/>
<dbReference type="SGD" id="S000007591">
    <property type="gene designation" value="YBL029C-A"/>
</dbReference>
<dbReference type="VEuPathDB" id="FungiDB:YBL029C-A"/>
<dbReference type="eggNOG" id="ENOG502S3KC">
    <property type="taxonomic scope" value="Eukaryota"/>
</dbReference>
<dbReference type="HOGENOM" id="CLU_115926_1_0_1"/>
<dbReference type="InParanoid" id="Q3E756"/>
<dbReference type="OMA" id="CPICNWR"/>
<dbReference type="OrthoDB" id="5545479at2759"/>
<dbReference type="BioCyc" id="YEAST:G3O-29251-MONOMER"/>
<dbReference type="BioGRID-ORCS" id="852251">
    <property type="hits" value="1 hit in 10 CRISPR screens"/>
</dbReference>
<dbReference type="PRO" id="PR:Q3E756"/>
<dbReference type="Proteomes" id="UP000002311">
    <property type="component" value="Chromosome II"/>
</dbReference>
<dbReference type="RNAct" id="Q3E756">
    <property type="molecule type" value="protein"/>
</dbReference>
<dbReference type="GO" id="GO:0005886">
    <property type="term" value="C:plasma membrane"/>
    <property type="evidence" value="ECO:0007005"/>
    <property type="project" value="SGD"/>
</dbReference>
<dbReference type="PANTHER" id="PTHR28139">
    <property type="entry name" value="UPF0768 PROTEIN YBL029C-A"/>
    <property type="match status" value="1"/>
</dbReference>
<dbReference type="PANTHER" id="PTHR28139:SF1">
    <property type="entry name" value="UPF0768 PROTEIN YBL029C-A"/>
    <property type="match status" value="1"/>
</dbReference>
<organism>
    <name type="scientific">Saccharomyces cerevisiae (strain ATCC 204508 / S288c)</name>
    <name type="common">Baker's yeast</name>
    <dbReference type="NCBI Taxonomy" id="559292"/>
    <lineage>
        <taxon>Eukaryota</taxon>
        <taxon>Fungi</taxon>
        <taxon>Dikarya</taxon>
        <taxon>Ascomycota</taxon>
        <taxon>Saccharomycotina</taxon>
        <taxon>Saccharomycetes</taxon>
        <taxon>Saccharomycetales</taxon>
        <taxon>Saccharomycetaceae</taxon>
        <taxon>Saccharomyces</taxon>
    </lineage>
</organism>
<keyword id="KW-1003">Cell membrane</keyword>
<keyword id="KW-0472">Membrane</keyword>
<keyword id="KW-1185">Reference proteome</keyword>